<proteinExistence type="inferred from homology"/>
<sequence>MELPIEEIKVRKVLDSRGNFTVEADVTVPNGFGRTSAPAGASTGETEVIAFSKSGIDASIQFFESKVKRSLIGFNALDQSGFDKLLTDIDGSGNFSNLGGNLATALSMSVAKAAAQSLGIPLYRYVGGIRSTIPRPMGNVIGGGKHARNGTSIQEFLVSAQGSTFLESAYINVLVHRRIGDMLSDKFKDISIGVGDERTWSVNLSDEEAFEILNEAVKEISSEKKVKIYTGVDFAADSLYENGKYVYKHTTKSRDEQIDYAISISKDFGVYYIEDPMYDTDFDGFAEITARIGDRSLIVGDDLYTTNPDRIRKGVEKKSTNAVLIKVNQIGTLSAAREAVAVATFAGMKNIVSHRSGETTDDFLAHLSVAFGSTFVKTGVIGGERVAKLNEIARIEECLTS</sequence>
<evidence type="ECO:0000255" key="1">
    <source>
        <dbReference type="HAMAP-Rule" id="MF_00318"/>
    </source>
</evidence>
<protein>
    <recommendedName>
        <fullName evidence="1">Enolase</fullName>
        <ecNumber evidence="1">4.2.1.11</ecNumber>
    </recommendedName>
    <alternativeName>
        <fullName evidence="1">2-phospho-D-glycerate hydro-lyase</fullName>
    </alternativeName>
    <alternativeName>
        <fullName evidence="1">2-phosphoglycerate dehydratase</fullName>
    </alternativeName>
</protein>
<organism>
    <name type="scientific">Thermoplasma acidophilum (strain ATCC 25905 / DSM 1728 / JCM 9062 / NBRC 15155 / AMRC-C165)</name>
    <dbReference type="NCBI Taxonomy" id="273075"/>
    <lineage>
        <taxon>Archaea</taxon>
        <taxon>Methanobacteriati</taxon>
        <taxon>Thermoplasmatota</taxon>
        <taxon>Thermoplasmata</taxon>
        <taxon>Thermoplasmatales</taxon>
        <taxon>Thermoplasmataceae</taxon>
        <taxon>Thermoplasma</taxon>
    </lineage>
</organism>
<accession>Q9HJT1</accession>
<name>ENO_THEAC</name>
<feature type="chain" id="PRO_0000134037" description="Enolase">
    <location>
        <begin position="1"/>
        <end position="401"/>
    </location>
</feature>
<feature type="active site" description="Proton donor" evidence="1">
    <location>
        <position position="197"/>
    </location>
</feature>
<feature type="active site" description="Proton acceptor" evidence="1">
    <location>
        <position position="326"/>
    </location>
</feature>
<feature type="binding site" evidence="1">
    <location>
        <position position="154"/>
    </location>
    <ligand>
        <name>(2R)-2-phosphoglycerate</name>
        <dbReference type="ChEBI" id="CHEBI:58289"/>
    </ligand>
</feature>
<feature type="binding site" evidence="1">
    <location>
        <position position="233"/>
    </location>
    <ligand>
        <name>Mg(2+)</name>
        <dbReference type="ChEBI" id="CHEBI:18420"/>
    </ligand>
</feature>
<feature type="binding site" evidence="1">
    <location>
        <position position="274"/>
    </location>
    <ligand>
        <name>Mg(2+)</name>
        <dbReference type="ChEBI" id="CHEBI:18420"/>
    </ligand>
</feature>
<feature type="binding site" evidence="1">
    <location>
        <position position="301"/>
    </location>
    <ligand>
        <name>Mg(2+)</name>
        <dbReference type="ChEBI" id="CHEBI:18420"/>
    </ligand>
</feature>
<feature type="binding site" evidence="1">
    <location>
        <position position="326"/>
    </location>
    <ligand>
        <name>(2R)-2-phosphoglycerate</name>
        <dbReference type="ChEBI" id="CHEBI:58289"/>
    </ligand>
</feature>
<feature type="binding site" evidence="1">
    <location>
        <position position="355"/>
    </location>
    <ligand>
        <name>(2R)-2-phosphoglycerate</name>
        <dbReference type="ChEBI" id="CHEBI:58289"/>
    </ligand>
</feature>
<feature type="binding site" evidence="1">
    <location>
        <position position="356"/>
    </location>
    <ligand>
        <name>(2R)-2-phosphoglycerate</name>
        <dbReference type="ChEBI" id="CHEBI:58289"/>
    </ligand>
</feature>
<feature type="binding site" evidence="1">
    <location>
        <position position="377"/>
    </location>
    <ligand>
        <name>(2R)-2-phosphoglycerate</name>
        <dbReference type="ChEBI" id="CHEBI:58289"/>
    </ligand>
</feature>
<dbReference type="EC" id="4.2.1.11" evidence="1"/>
<dbReference type="EMBL" id="AL445065">
    <property type="protein sequence ID" value="CAC12011.1"/>
    <property type="molecule type" value="Genomic_DNA"/>
</dbReference>
<dbReference type="RefSeq" id="WP_010901292.1">
    <property type="nucleotide sequence ID" value="NC_002578.1"/>
</dbReference>
<dbReference type="SMR" id="Q9HJT1"/>
<dbReference type="FunCoup" id="Q9HJT1">
    <property type="interactions" value="150"/>
</dbReference>
<dbReference type="STRING" id="273075.gene:9572096"/>
<dbReference type="PaxDb" id="273075-Ta0882"/>
<dbReference type="EnsemblBacteria" id="CAC12011">
    <property type="protein sequence ID" value="CAC12011"/>
    <property type="gene ID" value="CAC12011"/>
</dbReference>
<dbReference type="KEGG" id="tac:Ta0882"/>
<dbReference type="eggNOG" id="arCOG01169">
    <property type="taxonomic scope" value="Archaea"/>
</dbReference>
<dbReference type="HOGENOM" id="CLU_031223_0_1_2"/>
<dbReference type="InParanoid" id="Q9HJT1"/>
<dbReference type="OrthoDB" id="8680at2157"/>
<dbReference type="UniPathway" id="UPA00109">
    <property type="reaction ID" value="UER00187"/>
</dbReference>
<dbReference type="Proteomes" id="UP000001024">
    <property type="component" value="Chromosome"/>
</dbReference>
<dbReference type="GO" id="GO:0009986">
    <property type="term" value="C:cell surface"/>
    <property type="evidence" value="ECO:0007669"/>
    <property type="project" value="UniProtKB-SubCell"/>
</dbReference>
<dbReference type="GO" id="GO:0005576">
    <property type="term" value="C:extracellular region"/>
    <property type="evidence" value="ECO:0007669"/>
    <property type="project" value="UniProtKB-SubCell"/>
</dbReference>
<dbReference type="GO" id="GO:0000015">
    <property type="term" value="C:phosphopyruvate hydratase complex"/>
    <property type="evidence" value="ECO:0007669"/>
    <property type="project" value="InterPro"/>
</dbReference>
<dbReference type="GO" id="GO:0000287">
    <property type="term" value="F:magnesium ion binding"/>
    <property type="evidence" value="ECO:0007669"/>
    <property type="project" value="UniProtKB-UniRule"/>
</dbReference>
<dbReference type="GO" id="GO:0004634">
    <property type="term" value="F:phosphopyruvate hydratase activity"/>
    <property type="evidence" value="ECO:0007669"/>
    <property type="project" value="UniProtKB-UniRule"/>
</dbReference>
<dbReference type="GO" id="GO:0006096">
    <property type="term" value="P:glycolytic process"/>
    <property type="evidence" value="ECO:0007669"/>
    <property type="project" value="UniProtKB-UniRule"/>
</dbReference>
<dbReference type="CDD" id="cd03313">
    <property type="entry name" value="enolase"/>
    <property type="match status" value="1"/>
</dbReference>
<dbReference type="Gene3D" id="3.20.20.120">
    <property type="entry name" value="Enolase-like C-terminal domain"/>
    <property type="match status" value="1"/>
</dbReference>
<dbReference type="Gene3D" id="3.30.390.10">
    <property type="entry name" value="Enolase-like, N-terminal domain"/>
    <property type="match status" value="1"/>
</dbReference>
<dbReference type="HAMAP" id="MF_00318">
    <property type="entry name" value="Enolase"/>
    <property type="match status" value="1"/>
</dbReference>
<dbReference type="InterPro" id="IPR000941">
    <property type="entry name" value="Enolase"/>
</dbReference>
<dbReference type="InterPro" id="IPR036849">
    <property type="entry name" value="Enolase-like_C_sf"/>
</dbReference>
<dbReference type="InterPro" id="IPR029017">
    <property type="entry name" value="Enolase-like_N"/>
</dbReference>
<dbReference type="InterPro" id="IPR020810">
    <property type="entry name" value="Enolase_C"/>
</dbReference>
<dbReference type="InterPro" id="IPR020809">
    <property type="entry name" value="Enolase_CS"/>
</dbReference>
<dbReference type="InterPro" id="IPR020811">
    <property type="entry name" value="Enolase_N"/>
</dbReference>
<dbReference type="PANTHER" id="PTHR11902">
    <property type="entry name" value="ENOLASE"/>
    <property type="match status" value="1"/>
</dbReference>
<dbReference type="PANTHER" id="PTHR11902:SF1">
    <property type="entry name" value="ENOLASE"/>
    <property type="match status" value="1"/>
</dbReference>
<dbReference type="Pfam" id="PF00113">
    <property type="entry name" value="Enolase_C"/>
    <property type="match status" value="1"/>
</dbReference>
<dbReference type="Pfam" id="PF03952">
    <property type="entry name" value="Enolase_N"/>
    <property type="match status" value="1"/>
</dbReference>
<dbReference type="PIRSF" id="PIRSF001400">
    <property type="entry name" value="Enolase"/>
    <property type="match status" value="1"/>
</dbReference>
<dbReference type="PRINTS" id="PR00148">
    <property type="entry name" value="ENOLASE"/>
</dbReference>
<dbReference type="SFLD" id="SFLDF00002">
    <property type="entry name" value="enolase"/>
    <property type="match status" value="1"/>
</dbReference>
<dbReference type="SFLD" id="SFLDG00178">
    <property type="entry name" value="enolase"/>
    <property type="match status" value="1"/>
</dbReference>
<dbReference type="SMART" id="SM01192">
    <property type="entry name" value="Enolase_C"/>
    <property type="match status" value="1"/>
</dbReference>
<dbReference type="SMART" id="SM01193">
    <property type="entry name" value="Enolase_N"/>
    <property type="match status" value="1"/>
</dbReference>
<dbReference type="SUPFAM" id="SSF51604">
    <property type="entry name" value="Enolase C-terminal domain-like"/>
    <property type="match status" value="1"/>
</dbReference>
<dbReference type="SUPFAM" id="SSF54826">
    <property type="entry name" value="Enolase N-terminal domain-like"/>
    <property type="match status" value="1"/>
</dbReference>
<dbReference type="PROSITE" id="PS00164">
    <property type="entry name" value="ENOLASE"/>
    <property type="match status" value="1"/>
</dbReference>
<comment type="function">
    <text evidence="1">Catalyzes the reversible conversion of 2-phosphoglycerate (2-PG) into phosphoenolpyruvate (PEP). It is essential for the degradation of carbohydrates via glycolysis.</text>
</comment>
<comment type="catalytic activity">
    <reaction evidence="1">
        <text>(2R)-2-phosphoglycerate = phosphoenolpyruvate + H2O</text>
        <dbReference type="Rhea" id="RHEA:10164"/>
        <dbReference type="ChEBI" id="CHEBI:15377"/>
        <dbReference type="ChEBI" id="CHEBI:58289"/>
        <dbReference type="ChEBI" id="CHEBI:58702"/>
        <dbReference type="EC" id="4.2.1.11"/>
    </reaction>
</comment>
<comment type="cofactor">
    <cofactor evidence="1">
        <name>Mg(2+)</name>
        <dbReference type="ChEBI" id="CHEBI:18420"/>
    </cofactor>
    <text evidence="1">Binds a second Mg(2+) ion via substrate during catalysis.</text>
</comment>
<comment type="pathway">
    <text evidence="1">Carbohydrate degradation; glycolysis; pyruvate from D-glyceraldehyde 3-phosphate: step 4/5.</text>
</comment>
<comment type="subcellular location">
    <subcellularLocation>
        <location evidence="1">Cytoplasm</location>
    </subcellularLocation>
    <subcellularLocation>
        <location evidence="1">Secreted</location>
    </subcellularLocation>
    <subcellularLocation>
        <location evidence="1">Cell surface</location>
    </subcellularLocation>
    <text evidence="1">Fractions of enolase are present in both the cytoplasm and on the cell surface.</text>
</comment>
<comment type="similarity">
    <text evidence="1">Belongs to the enolase family.</text>
</comment>
<keyword id="KW-0963">Cytoplasm</keyword>
<keyword id="KW-0324">Glycolysis</keyword>
<keyword id="KW-0456">Lyase</keyword>
<keyword id="KW-0460">Magnesium</keyword>
<keyword id="KW-0479">Metal-binding</keyword>
<keyword id="KW-1185">Reference proteome</keyword>
<keyword id="KW-0964">Secreted</keyword>
<reference key="1">
    <citation type="journal article" date="2000" name="Nature">
        <title>The genome sequence of the thermoacidophilic scavenger Thermoplasma acidophilum.</title>
        <authorList>
            <person name="Ruepp A."/>
            <person name="Graml W."/>
            <person name="Santos-Martinez M.-L."/>
            <person name="Koretke K.K."/>
            <person name="Volker C."/>
            <person name="Mewes H.-W."/>
            <person name="Frishman D."/>
            <person name="Stocker S."/>
            <person name="Lupas A.N."/>
            <person name="Baumeister W."/>
        </authorList>
    </citation>
    <scope>NUCLEOTIDE SEQUENCE [LARGE SCALE GENOMIC DNA]</scope>
    <source>
        <strain>ATCC 25905 / DSM 1728 / JCM 9062 / NBRC 15155 / AMRC-C165</strain>
    </source>
</reference>
<gene>
    <name evidence="1" type="primary">eno</name>
    <name type="ordered locus">Ta0882</name>
</gene>